<organism>
    <name type="scientific">Mus musculus</name>
    <name type="common">Mouse</name>
    <dbReference type="NCBI Taxonomy" id="10090"/>
    <lineage>
        <taxon>Eukaryota</taxon>
        <taxon>Metazoa</taxon>
        <taxon>Chordata</taxon>
        <taxon>Craniata</taxon>
        <taxon>Vertebrata</taxon>
        <taxon>Euteleostomi</taxon>
        <taxon>Mammalia</taxon>
        <taxon>Eutheria</taxon>
        <taxon>Euarchontoglires</taxon>
        <taxon>Glires</taxon>
        <taxon>Rodentia</taxon>
        <taxon>Myomorpha</taxon>
        <taxon>Muroidea</taxon>
        <taxon>Muridae</taxon>
        <taxon>Murinae</taxon>
        <taxon>Mus</taxon>
        <taxon>Mus</taxon>
    </lineage>
</organism>
<name>EAF2_MOUSE</name>
<reference key="1">
    <citation type="journal article" date="2003" name="Cancer Res.">
        <title>Suppression of prostate tumor growth by U19, a novel testosterone-regulated apoptosis inducer.</title>
        <authorList>
            <person name="Xiao W."/>
            <person name="Zhang Q."/>
            <person name="Jiang F."/>
            <person name="Pins M."/>
            <person name="Kozlowski J.M."/>
            <person name="Wang Z."/>
        </authorList>
    </citation>
    <scope>NUCLEOTIDE SEQUENCE [MRNA] (ISOFORM 1)</scope>
    <source>
        <strain>BALB/cJ</strain>
    </source>
</reference>
<reference key="2">
    <citation type="journal article" date="2003" name="Dev. Dyn.">
        <title>Expression of murine ELL-associated factor 2 (Eaf2) is developmentally regulated.</title>
        <authorList>
            <person name="Li M."/>
            <person name="Wu X."/>
            <person name="Zhuang F."/>
            <person name="Jiang S."/>
            <person name="Jiang M."/>
            <person name="Liu Y.-H."/>
        </authorList>
    </citation>
    <scope>NUCLEOTIDE SEQUENCE [MRNA] (ISOFORM 1)</scope>
    <scope>DEVELOPMENTAL STAGE</scope>
    <scope>TISSUE SPECIFICITY</scope>
</reference>
<reference key="3">
    <citation type="journal article" date="2003" name="J. Biochem.">
        <title>Identification of a novel tissue-specific transcriptional activator FESTA as a protein that interacts with the transcription elongation factor S-II.</title>
        <authorList>
            <person name="Saso K."/>
            <person name="Ito T."/>
            <person name="Natori S."/>
            <person name="Sekimizu K."/>
        </authorList>
    </citation>
    <scope>NUCLEOTIDE SEQUENCE [MRNA] (ISOFORM 2)</scope>
    <scope>ROLE IN TCEA1-TRANSCRIPTION ACTIVATION</scope>
    <scope>INTERACTION WITH TCEA1</scope>
    <scope>SUBCELLULAR LOCATION</scope>
    <scope>TISSUE SPECIFICITY</scope>
    <source>
        <strain>BALB/cJ</strain>
        <tissue>Kidney</tissue>
    </source>
</reference>
<reference key="4">
    <citation type="journal article" date="2004" name="Genome Res.">
        <title>The status, quality, and expansion of the NIH full-length cDNA project: the Mammalian Gene Collection (MGC).</title>
        <authorList>
            <consortium name="The MGC Project Team"/>
        </authorList>
    </citation>
    <scope>NUCLEOTIDE SEQUENCE [LARGE SCALE MRNA] (ISOFORMS 1 AND 2)</scope>
    <source>
        <strain>FVB/N</strain>
        <strain>FVB/N-3</strain>
        <tissue>Mammary tumor</tissue>
    </source>
</reference>
<keyword id="KW-0010">Activator</keyword>
<keyword id="KW-0025">Alternative splicing</keyword>
<keyword id="KW-0539">Nucleus</keyword>
<keyword id="KW-0597">Phosphoprotein</keyword>
<keyword id="KW-1185">Reference proteome</keyword>
<keyword id="KW-0804">Transcription</keyword>
<keyword id="KW-0805">Transcription regulation</keyword>
<protein>
    <recommendedName>
        <fullName>ELL-associated factor 2</fullName>
    </recommendedName>
    <alternativeName>
        <fullName>Ehrlich S-II transcriptional activator factor</fullName>
    </alternativeName>
    <alternativeName>
        <fullName>Testosterone-regulated apoptosis inducer and tumor suppressor protein</fullName>
    </alternativeName>
</protein>
<dbReference type="EMBL" id="AY049021">
    <property type="protein sequence ID" value="AAL12224.1"/>
    <property type="molecule type" value="mRNA"/>
</dbReference>
<dbReference type="EMBL" id="AY034479">
    <property type="protein sequence ID" value="AAK59701.1"/>
    <property type="molecule type" value="mRNA"/>
</dbReference>
<dbReference type="EMBL" id="AB081298">
    <property type="protein sequence ID" value="BAC77525.1"/>
    <property type="status" value="ALT_INIT"/>
    <property type="molecule type" value="mRNA"/>
</dbReference>
<dbReference type="EMBL" id="BC004721">
    <property type="protein sequence ID" value="AAH04721.1"/>
    <property type="status" value="ALT_INIT"/>
    <property type="molecule type" value="mRNA"/>
</dbReference>
<dbReference type="EMBL" id="BC056626">
    <property type="protein sequence ID" value="AAH56626.1"/>
    <property type="molecule type" value="mRNA"/>
</dbReference>
<dbReference type="CCDS" id="CCDS37335.1">
    <molecule id="Q91ZD6-2"/>
</dbReference>
<dbReference type="CCDS" id="CCDS49843.1">
    <molecule id="Q91ZD6-1"/>
</dbReference>
<dbReference type="RefSeq" id="NP_001106872.1">
    <molecule id="Q91ZD6-1"/>
    <property type="nucleotide sequence ID" value="NM_001113401.1"/>
</dbReference>
<dbReference type="RefSeq" id="NP_001106876.1">
    <molecule id="Q91ZD6-2"/>
    <property type="nucleotide sequence ID" value="NM_001113405.1"/>
</dbReference>
<dbReference type="RefSeq" id="NP_001345031.1">
    <molecule id="Q91ZD6-2"/>
    <property type="nucleotide sequence ID" value="NM_001358102.1"/>
</dbReference>
<dbReference type="RefSeq" id="NP_598872.1">
    <molecule id="Q91ZD6-2"/>
    <property type="nucleotide sequence ID" value="NM_134111.2"/>
</dbReference>
<dbReference type="RefSeq" id="XP_006521746.1">
    <molecule id="Q91ZD6-2"/>
    <property type="nucleotide sequence ID" value="XM_006521683.1"/>
</dbReference>
<dbReference type="RefSeq" id="XP_006521747.1">
    <property type="nucleotide sequence ID" value="XM_006521684.3"/>
</dbReference>
<dbReference type="RefSeq" id="XP_006521748.1">
    <molecule id="Q91ZD6-2"/>
    <property type="nucleotide sequence ID" value="XM_006521685.5"/>
</dbReference>
<dbReference type="RefSeq" id="XP_006521749.1">
    <property type="nucleotide sequence ID" value="XM_006521686.2"/>
</dbReference>
<dbReference type="RefSeq" id="XP_036015623.1">
    <molecule id="Q91ZD6-2"/>
    <property type="nucleotide sequence ID" value="XM_036159730.1"/>
</dbReference>
<dbReference type="RefSeq" id="XP_036015624.1">
    <molecule id="Q91ZD6-2"/>
    <property type="nucleotide sequence ID" value="XM_036159731.1"/>
</dbReference>
<dbReference type="SMR" id="Q91ZD6"/>
<dbReference type="BioGRID" id="223046">
    <property type="interactions" value="1"/>
</dbReference>
<dbReference type="FunCoup" id="Q91ZD6">
    <property type="interactions" value="1585"/>
</dbReference>
<dbReference type="IntAct" id="Q91ZD6">
    <property type="interactions" value="1"/>
</dbReference>
<dbReference type="STRING" id="10090.ENSMUSP00000110477"/>
<dbReference type="iPTMnet" id="Q91ZD6"/>
<dbReference type="PhosphoSitePlus" id="Q91ZD6"/>
<dbReference type="jPOST" id="Q91ZD6"/>
<dbReference type="PaxDb" id="10090-ENSMUSP00000110477"/>
<dbReference type="ProteomicsDB" id="277434">
    <molecule id="Q91ZD6-1"/>
</dbReference>
<dbReference type="ProteomicsDB" id="277435">
    <molecule id="Q91ZD6-2"/>
</dbReference>
<dbReference type="Antibodypedia" id="1994">
    <property type="antibodies" value="179 antibodies from 31 providers"/>
</dbReference>
<dbReference type="DNASU" id="106389"/>
<dbReference type="Ensembl" id="ENSMUST00000075946.12">
    <molecule id="Q91ZD6-2"/>
    <property type="protein sequence ID" value="ENSMUSP00000075331.6"/>
    <property type="gene ID" value="ENSMUSG00000022838.15"/>
</dbReference>
<dbReference type="Ensembl" id="ENSMUST00000114825.3">
    <molecule id="Q91ZD6-2"/>
    <property type="protein sequence ID" value="ENSMUSP00000110473.2"/>
    <property type="gene ID" value="ENSMUSG00000022838.15"/>
</dbReference>
<dbReference type="Ensembl" id="ENSMUST00000114829.9">
    <molecule id="Q91ZD6-1"/>
    <property type="protein sequence ID" value="ENSMUSP00000110477.3"/>
    <property type="gene ID" value="ENSMUSG00000022838.15"/>
</dbReference>
<dbReference type="GeneID" id="106389"/>
<dbReference type="KEGG" id="mmu:106389"/>
<dbReference type="UCSC" id="uc007zcx.1">
    <molecule id="Q91ZD6-1"/>
    <property type="organism name" value="mouse"/>
</dbReference>
<dbReference type="AGR" id="MGI:2146616"/>
<dbReference type="CTD" id="55840"/>
<dbReference type="MGI" id="MGI:2146616">
    <property type="gene designation" value="Eaf2"/>
</dbReference>
<dbReference type="VEuPathDB" id="HostDB:ENSMUSG00000022838"/>
<dbReference type="eggNOG" id="KOG4795">
    <property type="taxonomic scope" value="Eukaryota"/>
</dbReference>
<dbReference type="GeneTree" id="ENSGT00390000017724"/>
<dbReference type="HOGENOM" id="CLU_1885121_0_0_1"/>
<dbReference type="InParanoid" id="Q91ZD6"/>
<dbReference type="OMA" id="CLLFFDH"/>
<dbReference type="OrthoDB" id="125903at2759"/>
<dbReference type="PhylomeDB" id="Q91ZD6"/>
<dbReference type="TreeFam" id="TF320864"/>
<dbReference type="Reactome" id="R-MMU-112382">
    <property type="pathway name" value="Formation of RNA Pol II elongation complex"/>
</dbReference>
<dbReference type="Reactome" id="R-MMU-674695">
    <property type="pathway name" value="RNA Polymerase II Pre-transcription Events"/>
</dbReference>
<dbReference type="Reactome" id="R-MMU-75955">
    <property type="pathway name" value="RNA Polymerase II Transcription Elongation"/>
</dbReference>
<dbReference type="BioGRID-ORCS" id="106389">
    <property type="hits" value="3 hits in 76 CRISPR screens"/>
</dbReference>
<dbReference type="ChiTaRS" id="Eaf2">
    <property type="organism name" value="mouse"/>
</dbReference>
<dbReference type="PRO" id="PR:Q91ZD6"/>
<dbReference type="Proteomes" id="UP000000589">
    <property type="component" value="Chromosome 16"/>
</dbReference>
<dbReference type="RNAct" id="Q91ZD6">
    <property type="molecule type" value="protein"/>
</dbReference>
<dbReference type="Bgee" id="ENSMUSG00000022838">
    <property type="expression patterns" value="Expressed in female urethra and 140 other cell types or tissues"/>
</dbReference>
<dbReference type="ExpressionAtlas" id="Q91ZD6">
    <property type="expression patterns" value="baseline and differential"/>
</dbReference>
<dbReference type="GO" id="GO:0016607">
    <property type="term" value="C:nuclear speck"/>
    <property type="evidence" value="ECO:0007669"/>
    <property type="project" value="UniProtKB-SubCell"/>
</dbReference>
<dbReference type="GO" id="GO:0005654">
    <property type="term" value="C:nucleoplasm"/>
    <property type="evidence" value="ECO:0000314"/>
    <property type="project" value="MGI"/>
</dbReference>
<dbReference type="GO" id="GO:0005634">
    <property type="term" value="C:nucleus"/>
    <property type="evidence" value="ECO:0000266"/>
    <property type="project" value="MGI"/>
</dbReference>
<dbReference type="GO" id="GO:0032783">
    <property type="term" value="C:super elongation complex"/>
    <property type="evidence" value="ECO:0007669"/>
    <property type="project" value="InterPro"/>
</dbReference>
<dbReference type="GO" id="GO:0008023">
    <property type="term" value="C:transcription elongation factor complex"/>
    <property type="evidence" value="ECO:0000250"/>
    <property type="project" value="UniProtKB"/>
</dbReference>
<dbReference type="GO" id="GO:0003711">
    <property type="term" value="F:transcription elongation factor activity"/>
    <property type="evidence" value="ECO:0007669"/>
    <property type="project" value="Ensembl"/>
</dbReference>
<dbReference type="GO" id="GO:0060767">
    <property type="term" value="P:epithelial cell proliferation involved in prostate gland development"/>
    <property type="evidence" value="ECO:0000315"/>
    <property type="project" value="MGI"/>
</dbReference>
<dbReference type="GO" id="GO:0097193">
    <property type="term" value="P:intrinsic apoptotic signaling pathway"/>
    <property type="evidence" value="ECO:0000266"/>
    <property type="project" value="MGI"/>
</dbReference>
<dbReference type="GO" id="GO:0030308">
    <property type="term" value="P:negative regulation of cell growth"/>
    <property type="evidence" value="ECO:0000315"/>
    <property type="project" value="MGI"/>
</dbReference>
<dbReference type="GO" id="GO:0060770">
    <property type="term" value="P:negative regulation of epithelial cell proliferation involved in prostate gland development"/>
    <property type="evidence" value="ECO:0000315"/>
    <property type="project" value="MGI"/>
</dbReference>
<dbReference type="GO" id="GO:0045893">
    <property type="term" value="P:positive regulation of DNA-templated transcription"/>
    <property type="evidence" value="ECO:0000314"/>
    <property type="project" value="MGI"/>
</dbReference>
<dbReference type="GO" id="GO:0045944">
    <property type="term" value="P:positive regulation of transcription by RNA polymerase II"/>
    <property type="evidence" value="ECO:0007669"/>
    <property type="project" value="Ensembl"/>
</dbReference>
<dbReference type="GO" id="GO:0034243">
    <property type="term" value="P:regulation of transcription elongation by RNA polymerase II"/>
    <property type="evidence" value="ECO:0007669"/>
    <property type="project" value="Ensembl"/>
</dbReference>
<dbReference type="GO" id="GO:0006368">
    <property type="term" value="P:transcription elongation by RNA polymerase II"/>
    <property type="evidence" value="ECO:0007669"/>
    <property type="project" value="InterPro"/>
</dbReference>
<dbReference type="InterPro" id="IPR027093">
    <property type="entry name" value="EAF_fam"/>
</dbReference>
<dbReference type="InterPro" id="IPR019194">
    <property type="entry name" value="Tscrpt_elong_fac_Eaf_N"/>
</dbReference>
<dbReference type="PANTHER" id="PTHR15970:SF7">
    <property type="entry name" value="ELL-ASSOCIATED FACTOR 2"/>
    <property type="match status" value="1"/>
</dbReference>
<dbReference type="PANTHER" id="PTHR15970">
    <property type="entry name" value="ELL-ASSOCIATED FACTOR EAF"/>
    <property type="match status" value="1"/>
</dbReference>
<dbReference type="Pfam" id="PF09816">
    <property type="entry name" value="EAF"/>
    <property type="match status" value="1"/>
</dbReference>
<feature type="chain" id="PRO_0000130338" description="ELL-associated factor 2">
    <location>
        <begin position="1"/>
        <end position="262"/>
    </location>
</feature>
<feature type="region of interest" description="Necessary for interaction with ELL" evidence="1">
    <location>
        <begin position="17"/>
        <end position="104"/>
    </location>
</feature>
<feature type="region of interest" description="Disordered" evidence="3">
    <location>
        <begin position="170"/>
        <end position="237"/>
    </location>
</feature>
<feature type="region of interest" description="Necessary for transactivation activity" evidence="1">
    <location>
        <begin position="177"/>
        <end position="262"/>
    </location>
</feature>
<feature type="region of interest" description="Necessary for interaction with TCEA1 and transactivation activity" evidence="4">
    <location>
        <begin position="248"/>
        <end position="262"/>
    </location>
</feature>
<feature type="compositionally biased region" description="Low complexity" evidence="3">
    <location>
        <begin position="174"/>
        <end position="192"/>
    </location>
</feature>
<feature type="compositionally biased region" description="Acidic residues" evidence="3">
    <location>
        <begin position="193"/>
        <end position="202"/>
    </location>
</feature>
<feature type="compositionally biased region" description="Basic and acidic residues" evidence="3">
    <location>
        <begin position="227"/>
        <end position="237"/>
    </location>
</feature>
<feature type="modified residue" description="Phosphoserine" evidence="2">
    <location>
        <position position="146"/>
    </location>
</feature>
<feature type="modified residue" description="Phosphoserine" evidence="2">
    <location>
        <position position="151"/>
    </location>
</feature>
<feature type="modified residue" description="Phosphoserine" evidence="2">
    <location>
        <position position="154"/>
    </location>
</feature>
<feature type="splice variant" id="VSP_015311" description="In isoform 2." evidence="6 7">
    <location>
        <begin position="1"/>
        <end position="130"/>
    </location>
</feature>
<accession>Q91ZD6</accession>
<accession>Q7TN80</accession>
<accession>Q99KD2</accession>
<proteinExistence type="evidence at protein level"/>
<gene>
    <name type="primary">Eaf2</name>
    <name type="synonym">Festa</name>
    <name type="synonym">Traits</name>
</gene>
<evidence type="ECO:0000250" key="1"/>
<evidence type="ECO:0000250" key="2">
    <source>
        <dbReference type="UniProtKB" id="Q96CJ1"/>
    </source>
</evidence>
<evidence type="ECO:0000256" key="3">
    <source>
        <dbReference type="SAM" id="MobiDB-lite"/>
    </source>
</evidence>
<evidence type="ECO:0000269" key="4">
    <source>
    </source>
</evidence>
<evidence type="ECO:0000269" key="5">
    <source>
    </source>
</evidence>
<evidence type="ECO:0000303" key="6">
    <source>
    </source>
</evidence>
<evidence type="ECO:0000303" key="7">
    <source>
    </source>
</evidence>
<evidence type="ECO:0000305" key="8"/>
<sequence>MSGPAGLAYLDRRERVLKLGESFEKQPRCAFHTVRYDFKPASIDTSCEGNLEVGKGEQVTITLPNIEGSTPPVTVFKGSKRPYLKECILIINHDTGECRLEKLSSNITVKKTRVEGSSRIQYRLEQQQQQMWNLPRTSNLVQHSPSEEKMSPTSLMDDIERELKAEASLMDQMSSCDSSSDSKSSSSSSSEDSSSDSEDDDQFSPLGPRKYSSEHPSMSAGPQYRTSEADATCHRLQDHSTLLMSTLRSDLQLSESESDSED</sequence>
<comment type="function">
    <text evidence="1 4">Acts as a transcriptional transactivator of ELL and ELL2 elongation activities (By similarity). Acts as a transcriptional transactivator of TCEA1 elongation activity.</text>
</comment>
<comment type="subunit">
    <text evidence="1 4">Component of the super elongation complex (SEC), at least composed of EAF1, EAF2, CDK9, MLLT3/AF9, AFF (AFF1 or AFF4), the P-TEFb complex and ELL (ELL, ELL2 or ELL3). Interacts with ELL and ELL2 (By similarity). Isoform 1 and isoform 2 interact with TCEA1.</text>
</comment>
<comment type="subcellular location">
    <subcellularLocation>
        <location evidence="2">Nucleus speckle</location>
    </subcellularLocation>
</comment>
<comment type="alternative products">
    <event type="alternative splicing"/>
    <isoform>
        <id>Q91ZD6-1</id>
        <name>1</name>
        <name>FESTA-L</name>
        <sequence type="displayed"/>
    </isoform>
    <isoform>
        <id>Q91ZD6-2</id>
        <name>2</name>
        <name>FESTA-S</name>
        <sequence type="described" ref="VSP_015311"/>
    </isoform>
</comment>
<comment type="tissue specificity">
    <text evidence="4 5">Isoform 1 is expressed in ovary, uterus, mammary glands, brain, spleen, liver, lung, thymus, kidney, skeletal muscle, skin and testis. Isoform 2 is expressed in kidney.</text>
</comment>
<comment type="developmental stage">
    <text evidence="5">Expressed in brain and spinal cord at 10 dpc. Expressed in brain, spinal cord, cranial and spinal ganglia, lens, retina, cochlea, olfactory epithelium and pituitary at 12 dpc. Expressed in intestine, bladder endothelium, retinal ganglion cells, nephrons, bronchial epithelium, secretory epithelium of submandibular glands, tubular epithelium of the epididymis, ectodermal invaginations of mammary buds and vibrissae follicles, incisors and molars at 15 dpc.</text>
</comment>
<comment type="similarity">
    <text evidence="8">Belongs to the EAF family.</text>
</comment>
<comment type="sequence caution" evidence="8">
    <conflict type="erroneous initiation">
        <sequence resource="EMBL-CDS" id="AAH04721"/>
    </conflict>
</comment>
<comment type="sequence caution" evidence="8">
    <conflict type="erroneous initiation">
        <sequence resource="EMBL-CDS" id="BAC77525"/>
    </conflict>
</comment>